<protein>
    <recommendedName>
        <fullName evidence="1">Glycine cleavage system H protein</fullName>
    </recommendedName>
    <alternativeName>
        <fullName evidence="1">Octanoyl/lipoyl carrier protein</fullName>
    </alternativeName>
</protein>
<evidence type="ECO:0000255" key="1">
    <source>
        <dbReference type="HAMAP-Rule" id="MF_00272"/>
    </source>
</evidence>
<evidence type="ECO:0000255" key="2">
    <source>
        <dbReference type="PROSITE-ProRule" id="PRU01066"/>
    </source>
</evidence>
<proteinExistence type="inferred from homology"/>
<feature type="chain" id="PRO_1000119291" description="Glycine cleavage system H protein">
    <location>
        <begin position="1"/>
        <end position="127"/>
    </location>
</feature>
<feature type="domain" description="Lipoyl-binding" evidence="2">
    <location>
        <begin position="22"/>
        <end position="104"/>
    </location>
</feature>
<feature type="modified residue" description="N6-lipoyllysine" evidence="1">
    <location>
        <position position="63"/>
    </location>
</feature>
<dbReference type="EMBL" id="CP001283">
    <property type="protein sequence ID" value="ACK90496.1"/>
    <property type="molecule type" value="Genomic_DNA"/>
</dbReference>
<dbReference type="RefSeq" id="WP_000026899.1">
    <property type="nucleotide sequence ID" value="NC_011773.1"/>
</dbReference>
<dbReference type="SMR" id="B7JEE3"/>
<dbReference type="GeneID" id="45024848"/>
<dbReference type="KEGG" id="bcu:BCAH820_5097"/>
<dbReference type="HOGENOM" id="CLU_097408_2_2_9"/>
<dbReference type="Proteomes" id="UP000001363">
    <property type="component" value="Chromosome"/>
</dbReference>
<dbReference type="GO" id="GO:0005829">
    <property type="term" value="C:cytosol"/>
    <property type="evidence" value="ECO:0007669"/>
    <property type="project" value="TreeGrafter"/>
</dbReference>
<dbReference type="GO" id="GO:0005960">
    <property type="term" value="C:glycine cleavage complex"/>
    <property type="evidence" value="ECO:0007669"/>
    <property type="project" value="InterPro"/>
</dbReference>
<dbReference type="GO" id="GO:0019464">
    <property type="term" value="P:glycine decarboxylation via glycine cleavage system"/>
    <property type="evidence" value="ECO:0007669"/>
    <property type="project" value="UniProtKB-UniRule"/>
</dbReference>
<dbReference type="CDD" id="cd06848">
    <property type="entry name" value="GCS_H"/>
    <property type="match status" value="1"/>
</dbReference>
<dbReference type="Gene3D" id="2.40.50.100">
    <property type="match status" value="1"/>
</dbReference>
<dbReference type="HAMAP" id="MF_00272">
    <property type="entry name" value="GcvH"/>
    <property type="match status" value="1"/>
</dbReference>
<dbReference type="InterPro" id="IPR003016">
    <property type="entry name" value="2-oxoA_DH_lipoyl-BS"/>
</dbReference>
<dbReference type="InterPro" id="IPR000089">
    <property type="entry name" value="Biotin_lipoyl"/>
</dbReference>
<dbReference type="InterPro" id="IPR002930">
    <property type="entry name" value="GCV_H"/>
</dbReference>
<dbReference type="InterPro" id="IPR033753">
    <property type="entry name" value="GCV_H/Fam206"/>
</dbReference>
<dbReference type="InterPro" id="IPR017453">
    <property type="entry name" value="GCV_H_sub"/>
</dbReference>
<dbReference type="InterPro" id="IPR011053">
    <property type="entry name" value="Single_hybrid_motif"/>
</dbReference>
<dbReference type="NCBIfam" id="TIGR00527">
    <property type="entry name" value="gcvH"/>
    <property type="match status" value="1"/>
</dbReference>
<dbReference type="NCBIfam" id="NF002270">
    <property type="entry name" value="PRK01202.1"/>
    <property type="match status" value="1"/>
</dbReference>
<dbReference type="PANTHER" id="PTHR11715">
    <property type="entry name" value="GLYCINE CLEAVAGE SYSTEM H PROTEIN"/>
    <property type="match status" value="1"/>
</dbReference>
<dbReference type="PANTHER" id="PTHR11715:SF3">
    <property type="entry name" value="GLYCINE CLEAVAGE SYSTEM H PROTEIN-RELATED"/>
    <property type="match status" value="1"/>
</dbReference>
<dbReference type="Pfam" id="PF01597">
    <property type="entry name" value="GCV_H"/>
    <property type="match status" value="1"/>
</dbReference>
<dbReference type="SUPFAM" id="SSF51230">
    <property type="entry name" value="Single hybrid motif"/>
    <property type="match status" value="1"/>
</dbReference>
<dbReference type="PROSITE" id="PS50968">
    <property type="entry name" value="BIOTINYL_LIPOYL"/>
    <property type="match status" value="1"/>
</dbReference>
<dbReference type="PROSITE" id="PS00189">
    <property type="entry name" value="LIPOYL"/>
    <property type="match status" value="1"/>
</dbReference>
<keyword id="KW-0450">Lipoyl</keyword>
<name>GCSH_BACC0</name>
<comment type="function">
    <text evidence="1">The glycine cleavage system catalyzes the degradation of glycine. The H protein shuttles the methylamine group of glycine from the P protein to the T protein.</text>
</comment>
<comment type="function">
    <text evidence="1">Is also involved in protein lipoylation via its role as an octanoyl/lipoyl carrier protein intermediate.</text>
</comment>
<comment type="cofactor">
    <cofactor evidence="1">
        <name>(R)-lipoate</name>
        <dbReference type="ChEBI" id="CHEBI:83088"/>
    </cofactor>
    <text evidence="1">Binds 1 lipoyl cofactor covalently.</text>
</comment>
<comment type="subunit">
    <text evidence="1">The glycine cleavage system is composed of four proteins: P, T, L and H.</text>
</comment>
<comment type="similarity">
    <text evidence="1">Belongs to the GcvH family.</text>
</comment>
<reference key="1">
    <citation type="submission" date="2008-10" db="EMBL/GenBank/DDBJ databases">
        <title>Genome sequence of Bacillus cereus AH820.</title>
        <authorList>
            <person name="Dodson R.J."/>
            <person name="Durkin A.S."/>
            <person name="Rosovitz M.J."/>
            <person name="Rasko D.A."/>
            <person name="Hoffmaster A."/>
            <person name="Ravel J."/>
            <person name="Sutton G."/>
        </authorList>
    </citation>
    <scope>NUCLEOTIDE SEQUENCE [LARGE SCALE GENOMIC DNA]</scope>
    <source>
        <strain>AH820</strain>
    </source>
</reference>
<organism>
    <name type="scientific">Bacillus cereus (strain AH820)</name>
    <dbReference type="NCBI Taxonomy" id="405535"/>
    <lineage>
        <taxon>Bacteria</taxon>
        <taxon>Bacillati</taxon>
        <taxon>Bacillota</taxon>
        <taxon>Bacilli</taxon>
        <taxon>Bacillales</taxon>
        <taxon>Bacillaceae</taxon>
        <taxon>Bacillus</taxon>
        <taxon>Bacillus cereus group</taxon>
    </lineage>
</organism>
<accession>B7JEE3</accession>
<sequence>MSIPNNLRYSEEHEWVKTEGNEVVIGITHFAQNELGDIVFVELPEVGATIEADEPFGSVESVKTVSELYAPVSGKVVAVNEELSDQPELVNESPYEGAWMVKVELSDASQVEKLLTAEKYAEMTNQD</sequence>
<gene>
    <name evidence="1" type="primary">gcvH</name>
    <name type="ordered locus">BCAH820_5097</name>
</gene>